<gene>
    <name evidence="1" type="primary">nusB</name>
    <name type="ordered locus">SPP_0462</name>
</gene>
<organism>
    <name type="scientific">Streptococcus pneumoniae (strain P1031)</name>
    <dbReference type="NCBI Taxonomy" id="488223"/>
    <lineage>
        <taxon>Bacteria</taxon>
        <taxon>Bacillati</taxon>
        <taxon>Bacillota</taxon>
        <taxon>Bacilli</taxon>
        <taxon>Lactobacillales</taxon>
        <taxon>Streptococcaceae</taxon>
        <taxon>Streptococcus</taxon>
    </lineage>
</organism>
<feature type="chain" id="PRO_1000192462" description="Transcription antitermination protein NusB">
    <location>
        <begin position="1"/>
        <end position="140"/>
    </location>
</feature>
<proteinExistence type="inferred from homology"/>
<comment type="function">
    <text evidence="1">Involved in transcription antitermination. Required for transcription of ribosomal RNA (rRNA) genes. Binds specifically to the boxA antiterminator sequence of the ribosomal RNA (rrn) operons.</text>
</comment>
<comment type="similarity">
    <text evidence="1">Belongs to the NusB family.</text>
</comment>
<dbReference type="EMBL" id="CP000920">
    <property type="protein sequence ID" value="ACO21502.1"/>
    <property type="molecule type" value="Genomic_DNA"/>
</dbReference>
<dbReference type="RefSeq" id="WP_000203654.1">
    <property type="nucleotide sequence ID" value="NC_012467.1"/>
</dbReference>
<dbReference type="SMR" id="C1CIT2"/>
<dbReference type="GeneID" id="45652116"/>
<dbReference type="KEGG" id="spp:SPP_0462"/>
<dbReference type="HOGENOM" id="CLU_087843_3_2_9"/>
<dbReference type="GO" id="GO:0005829">
    <property type="term" value="C:cytosol"/>
    <property type="evidence" value="ECO:0007669"/>
    <property type="project" value="TreeGrafter"/>
</dbReference>
<dbReference type="GO" id="GO:0003723">
    <property type="term" value="F:RNA binding"/>
    <property type="evidence" value="ECO:0007669"/>
    <property type="project" value="UniProtKB-UniRule"/>
</dbReference>
<dbReference type="GO" id="GO:0006353">
    <property type="term" value="P:DNA-templated transcription termination"/>
    <property type="evidence" value="ECO:0007669"/>
    <property type="project" value="UniProtKB-UniRule"/>
</dbReference>
<dbReference type="GO" id="GO:0031564">
    <property type="term" value="P:transcription antitermination"/>
    <property type="evidence" value="ECO:0007669"/>
    <property type="project" value="UniProtKB-KW"/>
</dbReference>
<dbReference type="FunFam" id="1.10.940.10:FF:000008">
    <property type="entry name" value="Transcription antitermination protein NusB"/>
    <property type="match status" value="1"/>
</dbReference>
<dbReference type="Gene3D" id="1.10.940.10">
    <property type="entry name" value="NusB-like"/>
    <property type="match status" value="1"/>
</dbReference>
<dbReference type="HAMAP" id="MF_00073">
    <property type="entry name" value="NusB"/>
    <property type="match status" value="1"/>
</dbReference>
<dbReference type="InterPro" id="IPR035926">
    <property type="entry name" value="NusB-like_sf"/>
</dbReference>
<dbReference type="InterPro" id="IPR011605">
    <property type="entry name" value="NusB_fam"/>
</dbReference>
<dbReference type="InterPro" id="IPR006027">
    <property type="entry name" value="NusB_RsmB_TIM44"/>
</dbReference>
<dbReference type="NCBIfam" id="TIGR01951">
    <property type="entry name" value="nusB"/>
    <property type="match status" value="1"/>
</dbReference>
<dbReference type="NCBIfam" id="NF001223">
    <property type="entry name" value="PRK00202.1-1"/>
    <property type="match status" value="1"/>
</dbReference>
<dbReference type="PANTHER" id="PTHR11078:SF3">
    <property type="entry name" value="ANTITERMINATION NUSB DOMAIN-CONTAINING PROTEIN"/>
    <property type="match status" value="1"/>
</dbReference>
<dbReference type="PANTHER" id="PTHR11078">
    <property type="entry name" value="N UTILIZATION SUBSTANCE PROTEIN B-RELATED"/>
    <property type="match status" value="1"/>
</dbReference>
<dbReference type="Pfam" id="PF01029">
    <property type="entry name" value="NusB"/>
    <property type="match status" value="1"/>
</dbReference>
<dbReference type="SUPFAM" id="SSF48013">
    <property type="entry name" value="NusB-like"/>
    <property type="match status" value="1"/>
</dbReference>
<accession>C1CIT2</accession>
<reference key="1">
    <citation type="journal article" date="2010" name="Genome Biol.">
        <title>Structure and dynamics of the pan-genome of Streptococcus pneumoniae and closely related species.</title>
        <authorList>
            <person name="Donati C."/>
            <person name="Hiller N.L."/>
            <person name="Tettelin H."/>
            <person name="Muzzi A."/>
            <person name="Croucher N.J."/>
            <person name="Angiuoli S.V."/>
            <person name="Oggioni M."/>
            <person name="Dunning Hotopp J.C."/>
            <person name="Hu F.Z."/>
            <person name="Riley D.R."/>
            <person name="Covacci A."/>
            <person name="Mitchell T.J."/>
            <person name="Bentley S.D."/>
            <person name="Kilian M."/>
            <person name="Ehrlich G.D."/>
            <person name="Rappuoli R."/>
            <person name="Moxon E.R."/>
            <person name="Masignani V."/>
        </authorList>
    </citation>
    <scope>NUCLEOTIDE SEQUENCE [LARGE SCALE GENOMIC DNA]</scope>
    <source>
        <strain>P1031</strain>
    </source>
</reference>
<keyword id="KW-0694">RNA-binding</keyword>
<keyword id="KW-0804">Transcription</keyword>
<keyword id="KW-0889">Transcription antitermination</keyword>
<keyword id="KW-0805">Transcription regulation</keyword>
<protein>
    <recommendedName>
        <fullName evidence="1">Transcription antitermination protein NusB</fullName>
    </recommendedName>
    <alternativeName>
        <fullName evidence="1">Antitermination factor NusB</fullName>
    </alternativeName>
</protein>
<sequence length="140" mass="15964">MTSPLLESRRQLRKCAFQALMSLEFGTDVETACRFAYTHDREDTDVQLPAFLIDLVSGVQAKKEELDKQITQHLKAGWTIERLTLVERNLLRLGVFEITSFDTPQLVAVNEAIELAKDFSDQKSARFINGLLSQFVTEEQ</sequence>
<evidence type="ECO:0000255" key="1">
    <source>
        <dbReference type="HAMAP-Rule" id="MF_00073"/>
    </source>
</evidence>
<name>NUSB_STRZP</name>